<accession>Q1D6E2</accession>
<protein>
    <recommendedName>
        <fullName evidence="1">Large ribosomal subunit protein bL35</fullName>
    </recommendedName>
    <alternativeName>
        <fullName evidence="3">50S ribosomal protein L35</fullName>
    </alternativeName>
</protein>
<gene>
    <name evidence="1" type="primary">rpmI</name>
    <name type="ordered locus">MXAN_3592</name>
</gene>
<feature type="chain" id="PRO_0000258710" description="Large ribosomal subunit protein bL35">
    <location>
        <begin position="1"/>
        <end position="68"/>
    </location>
</feature>
<feature type="region of interest" description="Disordered" evidence="2">
    <location>
        <begin position="1"/>
        <end position="54"/>
    </location>
</feature>
<feature type="compositionally biased region" description="Basic residues" evidence="2">
    <location>
        <begin position="1"/>
        <end position="11"/>
    </location>
</feature>
<feature type="compositionally biased region" description="Basic residues" evidence="2">
    <location>
        <begin position="19"/>
        <end position="29"/>
    </location>
</feature>
<name>RL35_MYXXD</name>
<comment type="similarity">
    <text evidence="1">Belongs to the bacterial ribosomal protein bL35 family.</text>
</comment>
<dbReference type="EMBL" id="CP000113">
    <property type="protein sequence ID" value="ABF90705.1"/>
    <property type="molecule type" value="Genomic_DNA"/>
</dbReference>
<dbReference type="RefSeq" id="WP_011553617.1">
    <property type="nucleotide sequence ID" value="NC_008095.1"/>
</dbReference>
<dbReference type="SMR" id="Q1D6E2"/>
<dbReference type="STRING" id="246197.MXAN_3592"/>
<dbReference type="EnsemblBacteria" id="ABF90705">
    <property type="protein sequence ID" value="ABF90705"/>
    <property type="gene ID" value="MXAN_3592"/>
</dbReference>
<dbReference type="GeneID" id="41360938"/>
<dbReference type="KEGG" id="mxa:MXAN_3592"/>
<dbReference type="eggNOG" id="COG0291">
    <property type="taxonomic scope" value="Bacteria"/>
</dbReference>
<dbReference type="HOGENOM" id="CLU_169643_2_1_7"/>
<dbReference type="OrthoDB" id="9804851at2"/>
<dbReference type="Proteomes" id="UP000002402">
    <property type="component" value="Chromosome"/>
</dbReference>
<dbReference type="GO" id="GO:1990904">
    <property type="term" value="C:ribonucleoprotein complex"/>
    <property type="evidence" value="ECO:0007669"/>
    <property type="project" value="UniProtKB-KW"/>
</dbReference>
<dbReference type="GO" id="GO:0005840">
    <property type="term" value="C:ribosome"/>
    <property type="evidence" value="ECO:0007669"/>
    <property type="project" value="UniProtKB-KW"/>
</dbReference>
<dbReference type="GO" id="GO:0003735">
    <property type="term" value="F:structural constituent of ribosome"/>
    <property type="evidence" value="ECO:0007669"/>
    <property type="project" value="InterPro"/>
</dbReference>
<dbReference type="GO" id="GO:0006412">
    <property type="term" value="P:translation"/>
    <property type="evidence" value="ECO:0007669"/>
    <property type="project" value="UniProtKB-UniRule"/>
</dbReference>
<dbReference type="FunFam" id="4.10.410.60:FF:000001">
    <property type="entry name" value="50S ribosomal protein L35"/>
    <property type="match status" value="1"/>
</dbReference>
<dbReference type="Gene3D" id="4.10.410.60">
    <property type="match status" value="1"/>
</dbReference>
<dbReference type="HAMAP" id="MF_00514">
    <property type="entry name" value="Ribosomal_bL35"/>
    <property type="match status" value="1"/>
</dbReference>
<dbReference type="InterPro" id="IPR001706">
    <property type="entry name" value="Ribosomal_bL35"/>
</dbReference>
<dbReference type="InterPro" id="IPR021137">
    <property type="entry name" value="Ribosomal_bL35-like"/>
</dbReference>
<dbReference type="InterPro" id="IPR018265">
    <property type="entry name" value="Ribosomal_bL35_CS"/>
</dbReference>
<dbReference type="InterPro" id="IPR037229">
    <property type="entry name" value="Ribosomal_bL35_sf"/>
</dbReference>
<dbReference type="NCBIfam" id="TIGR00001">
    <property type="entry name" value="rpmI_bact"/>
    <property type="match status" value="1"/>
</dbReference>
<dbReference type="Pfam" id="PF01632">
    <property type="entry name" value="Ribosomal_L35p"/>
    <property type="match status" value="1"/>
</dbReference>
<dbReference type="PRINTS" id="PR00064">
    <property type="entry name" value="RIBOSOMALL35"/>
</dbReference>
<dbReference type="SUPFAM" id="SSF143034">
    <property type="entry name" value="L35p-like"/>
    <property type="match status" value="1"/>
</dbReference>
<dbReference type="PROSITE" id="PS00936">
    <property type="entry name" value="RIBOSOMAL_L35"/>
    <property type="match status" value="1"/>
</dbReference>
<proteinExistence type="inferred from homology"/>
<reference key="1">
    <citation type="journal article" date="2006" name="Proc. Natl. Acad. Sci. U.S.A.">
        <title>Evolution of sensory complexity recorded in a myxobacterial genome.</title>
        <authorList>
            <person name="Goldman B.S."/>
            <person name="Nierman W.C."/>
            <person name="Kaiser D."/>
            <person name="Slater S.C."/>
            <person name="Durkin A.S."/>
            <person name="Eisen J.A."/>
            <person name="Ronning C.M."/>
            <person name="Barbazuk W.B."/>
            <person name="Blanchard M."/>
            <person name="Field C."/>
            <person name="Halling C."/>
            <person name="Hinkle G."/>
            <person name="Iartchuk O."/>
            <person name="Kim H.S."/>
            <person name="Mackenzie C."/>
            <person name="Madupu R."/>
            <person name="Miller N."/>
            <person name="Shvartsbeyn A."/>
            <person name="Sullivan S.A."/>
            <person name="Vaudin M."/>
            <person name="Wiegand R."/>
            <person name="Kaplan H.B."/>
        </authorList>
    </citation>
    <scope>NUCLEOTIDE SEQUENCE [LARGE SCALE GENOMIC DNA]</scope>
    <source>
        <strain>DK1622</strain>
    </source>
</reference>
<organism>
    <name type="scientific">Myxococcus xanthus (strain DK1622)</name>
    <dbReference type="NCBI Taxonomy" id="246197"/>
    <lineage>
        <taxon>Bacteria</taxon>
        <taxon>Pseudomonadati</taxon>
        <taxon>Myxococcota</taxon>
        <taxon>Myxococcia</taxon>
        <taxon>Myxococcales</taxon>
        <taxon>Cystobacterineae</taxon>
        <taxon>Myxococcaceae</taxon>
        <taxon>Myxococcus</taxon>
    </lineage>
</organism>
<sequence>MPKLKTRSSAKKRFDVKKSGKVKHGKAFAKHLFTFSKTPKSKRSNRGTGHLRDMDAKKVIKEMFPYGG</sequence>
<keyword id="KW-1185">Reference proteome</keyword>
<keyword id="KW-0687">Ribonucleoprotein</keyword>
<keyword id="KW-0689">Ribosomal protein</keyword>
<evidence type="ECO:0000255" key="1">
    <source>
        <dbReference type="HAMAP-Rule" id="MF_00514"/>
    </source>
</evidence>
<evidence type="ECO:0000256" key="2">
    <source>
        <dbReference type="SAM" id="MobiDB-lite"/>
    </source>
</evidence>
<evidence type="ECO:0000305" key="3"/>